<reference key="1">
    <citation type="journal article" date="2004" name="Gene">
        <title>TBP-associated factors in Arabidopsis.</title>
        <authorList>
            <person name="Lago C."/>
            <person name="Clerici E."/>
            <person name="Mizzi L."/>
            <person name="Colombo L."/>
            <person name="Kater M.M."/>
        </authorList>
    </citation>
    <scope>NUCLEOTIDE SEQUENCE [MRNA]</scope>
    <scope>IDENTIFICATION</scope>
    <scope>NOMENCLATURE</scope>
    <scope>TISSUE SPECIFICITY</scope>
</reference>
<reference key="2">
    <citation type="journal article" date="2007" name="Plant Mol. Biol.">
        <title>Yeast two-hybrid map of Arabidopsis TFIID.</title>
        <authorList>
            <person name="Lawit S.J."/>
            <person name="O'Grady K."/>
            <person name="Gurley W.B."/>
            <person name="Czarnecka-Verner E."/>
        </authorList>
    </citation>
    <scope>NUCLEOTIDE SEQUENCE [MRNA]</scope>
    <scope>SUBUNIT</scope>
    <scope>INTERACTION WITH TAF4B; TAF5; TAF10; TAF12; TAF12B; TAF13 AND TAF14</scope>
    <source>
        <strain>cv. Columbia</strain>
    </source>
</reference>
<reference key="3">
    <citation type="journal article" date="1999" name="Nature">
        <title>Sequence and analysis of chromosome 4 of the plant Arabidopsis thaliana.</title>
        <authorList>
            <person name="Mayer K.F.X."/>
            <person name="Schueller C."/>
            <person name="Wambutt R."/>
            <person name="Murphy G."/>
            <person name="Volckaert G."/>
            <person name="Pohl T."/>
            <person name="Duesterhoeft A."/>
            <person name="Stiekema W."/>
            <person name="Entian K.-D."/>
            <person name="Terryn N."/>
            <person name="Harris B."/>
            <person name="Ansorge W."/>
            <person name="Brandt P."/>
            <person name="Grivell L.A."/>
            <person name="Rieger M."/>
            <person name="Weichselgartner M."/>
            <person name="de Simone V."/>
            <person name="Obermaier B."/>
            <person name="Mache R."/>
            <person name="Mueller M."/>
            <person name="Kreis M."/>
            <person name="Delseny M."/>
            <person name="Puigdomenech P."/>
            <person name="Watson M."/>
            <person name="Schmidtheini T."/>
            <person name="Reichert B."/>
            <person name="Portetelle D."/>
            <person name="Perez-Alonso M."/>
            <person name="Boutry M."/>
            <person name="Bancroft I."/>
            <person name="Vos P."/>
            <person name="Hoheisel J."/>
            <person name="Zimmermann W."/>
            <person name="Wedler H."/>
            <person name="Ridley P."/>
            <person name="Langham S.-A."/>
            <person name="McCullagh B."/>
            <person name="Bilham L."/>
            <person name="Robben J."/>
            <person name="van der Schueren J."/>
            <person name="Grymonprez B."/>
            <person name="Chuang Y.-J."/>
            <person name="Vandenbussche F."/>
            <person name="Braeken M."/>
            <person name="Weltjens I."/>
            <person name="Voet M."/>
            <person name="Bastiaens I."/>
            <person name="Aert R."/>
            <person name="Defoor E."/>
            <person name="Weitzenegger T."/>
            <person name="Bothe G."/>
            <person name="Ramsperger U."/>
            <person name="Hilbert H."/>
            <person name="Braun M."/>
            <person name="Holzer E."/>
            <person name="Brandt A."/>
            <person name="Peters S."/>
            <person name="van Staveren M."/>
            <person name="Dirkse W."/>
            <person name="Mooijman P."/>
            <person name="Klein Lankhorst R."/>
            <person name="Rose M."/>
            <person name="Hauf J."/>
            <person name="Koetter P."/>
            <person name="Berneiser S."/>
            <person name="Hempel S."/>
            <person name="Feldpausch M."/>
            <person name="Lamberth S."/>
            <person name="Van den Daele H."/>
            <person name="De Keyser A."/>
            <person name="Buysshaert C."/>
            <person name="Gielen J."/>
            <person name="Villarroel R."/>
            <person name="De Clercq R."/>
            <person name="van Montagu M."/>
            <person name="Rogers J."/>
            <person name="Cronin A."/>
            <person name="Quail M.A."/>
            <person name="Bray-Allen S."/>
            <person name="Clark L."/>
            <person name="Doggett J."/>
            <person name="Hall S."/>
            <person name="Kay M."/>
            <person name="Lennard N."/>
            <person name="McLay K."/>
            <person name="Mayes R."/>
            <person name="Pettett A."/>
            <person name="Rajandream M.A."/>
            <person name="Lyne M."/>
            <person name="Benes V."/>
            <person name="Rechmann S."/>
            <person name="Borkova D."/>
            <person name="Bloecker H."/>
            <person name="Scharfe M."/>
            <person name="Grimm M."/>
            <person name="Loehnert T.-H."/>
            <person name="Dose S."/>
            <person name="de Haan M."/>
            <person name="Maarse A.C."/>
            <person name="Schaefer M."/>
            <person name="Mueller-Auer S."/>
            <person name="Gabel C."/>
            <person name="Fuchs M."/>
            <person name="Fartmann B."/>
            <person name="Granderath K."/>
            <person name="Dauner D."/>
            <person name="Herzl A."/>
            <person name="Neumann S."/>
            <person name="Argiriou A."/>
            <person name="Vitale D."/>
            <person name="Liguori R."/>
            <person name="Piravandi E."/>
            <person name="Massenet O."/>
            <person name="Quigley F."/>
            <person name="Clabauld G."/>
            <person name="Muendlein A."/>
            <person name="Felber R."/>
            <person name="Schnabl S."/>
            <person name="Hiller R."/>
            <person name="Schmidt W."/>
            <person name="Lecharny A."/>
            <person name="Aubourg S."/>
            <person name="Chefdor F."/>
            <person name="Cooke R."/>
            <person name="Berger C."/>
            <person name="Monfort A."/>
            <person name="Casacuberta E."/>
            <person name="Gibbons T."/>
            <person name="Weber N."/>
            <person name="Vandenbol M."/>
            <person name="Bargues M."/>
            <person name="Terol J."/>
            <person name="Torres A."/>
            <person name="Perez-Perez A."/>
            <person name="Purnelle B."/>
            <person name="Bent E."/>
            <person name="Johnson S."/>
            <person name="Tacon D."/>
            <person name="Jesse T."/>
            <person name="Heijnen L."/>
            <person name="Schwarz S."/>
            <person name="Scholler P."/>
            <person name="Heber S."/>
            <person name="Francs P."/>
            <person name="Bielke C."/>
            <person name="Frishman D."/>
            <person name="Haase D."/>
            <person name="Lemcke K."/>
            <person name="Mewes H.-W."/>
            <person name="Stocker S."/>
            <person name="Zaccaria P."/>
            <person name="Bevan M."/>
            <person name="Wilson R.K."/>
            <person name="de la Bastide M."/>
            <person name="Habermann K."/>
            <person name="Parnell L."/>
            <person name="Dedhia N."/>
            <person name="Gnoj L."/>
            <person name="Schutz K."/>
            <person name="Huang E."/>
            <person name="Spiegel L."/>
            <person name="Sekhon M."/>
            <person name="Murray J."/>
            <person name="Sheet P."/>
            <person name="Cordes M."/>
            <person name="Abu-Threideh J."/>
            <person name="Stoneking T."/>
            <person name="Kalicki J."/>
            <person name="Graves T."/>
            <person name="Harmon G."/>
            <person name="Edwards J."/>
            <person name="Latreille P."/>
            <person name="Courtney L."/>
            <person name="Cloud J."/>
            <person name="Abbott A."/>
            <person name="Scott K."/>
            <person name="Johnson D."/>
            <person name="Minx P."/>
            <person name="Bentley D."/>
            <person name="Fulton B."/>
            <person name="Miller N."/>
            <person name="Greco T."/>
            <person name="Kemp K."/>
            <person name="Kramer J."/>
            <person name="Fulton L."/>
            <person name="Mardis E."/>
            <person name="Dante M."/>
            <person name="Pepin K."/>
            <person name="Hillier L.W."/>
            <person name="Nelson J."/>
            <person name="Spieth J."/>
            <person name="Ryan E."/>
            <person name="Andrews S."/>
            <person name="Geisel C."/>
            <person name="Layman D."/>
            <person name="Du H."/>
            <person name="Ali J."/>
            <person name="Berghoff A."/>
            <person name="Jones K."/>
            <person name="Drone K."/>
            <person name="Cotton M."/>
            <person name="Joshu C."/>
            <person name="Antonoiu B."/>
            <person name="Zidanic M."/>
            <person name="Strong C."/>
            <person name="Sun H."/>
            <person name="Lamar B."/>
            <person name="Yordan C."/>
            <person name="Ma P."/>
            <person name="Zhong J."/>
            <person name="Preston R."/>
            <person name="Vil D."/>
            <person name="Shekher M."/>
            <person name="Matero A."/>
            <person name="Shah R."/>
            <person name="Swaby I.K."/>
            <person name="O'Shaughnessy A."/>
            <person name="Rodriguez M."/>
            <person name="Hoffman J."/>
            <person name="Till S."/>
            <person name="Granat S."/>
            <person name="Shohdy N."/>
            <person name="Hasegawa A."/>
            <person name="Hameed A."/>
            <person name="Lodhi M."/>
            <person name="Johnson A."/>
            <person name="Chen E."/>
            <person name="Marra M.A."/>
            <person name="Martienssen R."/>
            <person name="McCombie W.R."/>
        </authorList>
    </citation>
    <scope>NUCLEOTIDE SEQUENCE [LARGE SCALE GENOMIC DNA]</scope>
    <source>
        <strain>cv. Columbia</strain>
    </source>
</reference>
<reference key="4">
    <citation type="journal article" date="2017" name="Plant J.">
        <title>Araport11: a complete reannotation of the Arabidopsis thaliana reference genome.</title>
        <authorList>
            <person name="Cheng C.Y."/>
            <person name="Krishnakumar V."/>
            <person name="Chan A.P."/>
            <person name="Thibaud-Nissen F."/>
            <person name="Schobel S."/>
            <person name="Town C.D."/>
        </authorList>
    </citation>
    <scope>GENOME REANNOTATION</scope>
    <source>
        <strain>cv. Columbia</strain>
    </source>
</reference>
<reference key="5">
    <citation type="journal article" date="2003" name="Science">
        <title>Empirical analysis of transcriptional activity in the Arabidopsis genome.</title>
        <authorList>
            <person name="Yamada K."/>
            <person name="Lim J."/>
            <person name="Dale J.M."/>
            <person name="Chen H."/>
            <person name="Shinn P."/>
            <person name="Palm C.J."/>
            <person name="Southwick A.M."/>
            <person name="Wu H.C."/>
            <person name="Kim C.J."/>
            <person name="Nguyen M."/>
            <person name="Pham P.K."/>
            <person name="Cheuk R.F."/>
            <person name="Karlin-Newmann G."/>
            <person name="Liu S.X."/>
            <person name="Lam B."/>
            <person name="Sakano H."/>
            <person name="Wu T."/>
            <person name="Yu G."/>
            <person name="Miranda M."/>
            <person name="Quach H.L."/>
            <person name="Tripp M."/>
            <person name="Chang C.H."/>
            <person name="Lee J.M."/>
            <person name="Toriumi M.J."/>
            <person name="Chan M.M."/>
            <person name="Tang C.C."/>
            <person name="Onodera C.S."/>
            <person name="Deng J.M."/>
            <person name="Akiyama K."/>
            <person name="Ansari Y."/>
            <person name="Arakawa T."/>
            <person name="Banh J."/>
            <person name="Banno F."/>
            <person name="Bowser L."/>
            <person name="Brooks S.Y."/>
            <person name="Carninci P."/>
            <person name="Chao Q."/>
            <person name="Choy N."/>
            <person name="Enju A."/>
            <person name="Goldsmith A.D."/>
            <person name="Gurjal M."/>
            <person name="Hansen N.F."/>
            <person name="Hayashizaki Y."/>
            <person name="Johnson-Hopson C."/>
            <person name="Hsuan V.W."/>
            <person name="Iida K."/>
            <person name="Karnes M."/>
            <person name="Khan S."/>
            <person name="Koesema E."/>
            <person name="Ishida J."/>
            <person name="Jiang P.X."/>
            <person name="Jones T."/>
            <person name="Kawai J."/>
            <person name="Kamiya A."/>
            <person name="Meyers C."/>
            <person name="Nakajima M."/>
            <person name="Narusaka M."/>
            <person name="Seki M."/>
            <person name="Sakurai T."/>
            <person name="Satou M."/>
            <person name="Tamse R."/>
            <person name="Vaysberg M."/>
            <person name="Wallender E.K."/>
            <person name="Wong C."/>
            <person name="Yamamura Y."/>
            <person name="Yuan S."/>
            <person name="Shinozaki K."/>
            <person name="Davis R.W."/>
            <person name="Theologis A."/>
            <person name="Ecker J.R."/>
        </authorList>
    </citation>
    <scope>NUCLEOTIDE SEQUENCE [LARGE SCALE MRNA]</scope>
    <source>
        <strain>cv. Columbia</strain>
    </source>
</reference>
<reference key="6">
    <citation type="submission" date="2002-03" db="EMBL/GenBank/DDBJ databases">
        <title>Full-length cDNA from Arabidopsis thaliana.</title>
        <authorList>
            <person name="Brover V.V."/>
            <person name="Troukhan M.E."/>
            <person name="Alexandrov N.A."/>
            <person name="Lu Y.-P."/>
            <person name="Flavell R.B."/>
            <person name="Feldmann K.A."/>
        </authorList>
    </citation>
    <scope>NUCLEOTIDE SEQUENCE [LARGE SCALE MRNA]</scope>
</reference>
<name>TAF8_ARATH</name>
<comment type="function">
    <text evidence="1">TAFs are components of the transcription factor IID (TFIID) complex that is essential for mediating regulation of RNA polymerase transcription.</text>
</comment>
<comment type="subunit">
    <text evidence="3">Component of the TFIID complex. TFIID is composed of TATA binding protein (TBP) and a number of TBP-associated factors (TAFs) whose MWs range from 14-217 kDa. Can homodimerize. Interacts with TAF4B, TAF5, TAF10, TAF12, TAF12B, TAF13 and TAF14.</text>
</comment>
<comment type="interaction">
    <interactant intactId="EBI-1247615">
        <id>Q9SYZ9</id>
    </interactant>
    <interactant intactId="EBI-1247479">
        <id>O04173</id>
        <label>TAF10</label>
    </interactant>
    <organismsDiffer>false</organismsDiffer>
    <experiments>3</experiments>
</comment>
<comment type="subcellular location">
    <subcellularLocation>
        <location evidence="4">Nucleus</location>
    </subcellularLocation>
</comment>
<comment type="tissue specificity">
    <text evidence="2">Expressed in roots, leaves and inflorescences.</text>
</comment>
<comment type="similarity">
    <text evidence="4">Belongs to the TAF8 family.</text>
</comment>
<keyword id="KW-0010">Activator</keyword>
<keyword id="KW-0539">Nucleus</keyword>
<keyword id="KW-1185">Reference proteome</keyword>
<keyword id="KW-0804">Transcription</keyword>
<keyword id="KW-0805">Transcription regulation</keyword>
<dbReference type="EMBL" id="AY463623">
    <property type="protein sequence ID" value="AAR28025.1"/>
    <property type="molecule type" value="mRNA"/>
</dbReference>
<dbReference type="EMBL" id="AL035521">
    <property type="protein sequence ID" value="CAB36711.1"/>
    <property type="molecule type" value="Genomic_DNA"/>
</dbReference>
<dbReference type="EMBL" id="AL161585">
    <property type="protein sequence ID" value="CAB80151.1"/>
    <property type="molecule type" value="Genomic_DNA"/>
</dbReference>
<dbReference type="EMBL" id="CP002687">
    <property type="protein sequence ID" value="AEE86361.1"/>
    <property type="molecule type" value="Genomic_DNA"/>
</dbReference>
<dbReference type="EMBL" id="AF360178">
    <property type="protein sequence ID" value="AAK25888.1"/>
    <property type="molecule type" value="mRNA"/>
</dbReference>
<dbReference type="EMBL" id="AY039994">
    <property type="protein sequence ID" value="AAK64071.1"/>
    <property type="molecule type" value="mRNA"/>
</dbReference>
<dbReference type="EMBL" id="AY084690">
    <property type="protein sequence ID" value="AAM61252.1"/>
    <property type="molecule type" value="mRNA"/>
</dbReference>
<dbReference type="PIR" id="T04780">
    <property type="entry name" value="T04780"/>
</dbReference>
<dbReference type="RefSeq" id="NP_567964.1">
    <property type="nucleotide sequence ID" value="NM_119599.1"/>
</dbReference>
<dbReference type="SMR" id="Q9SYZ9"/>
<dbReference type="BioGRID" id="14866">
    <property type="interactions" value="8"/>
</dbReference>
<dbReference type="FunCoup" id="Q9SYZ9">
    <property type="interactions" value="3224"/>
</dbReference>
<dbReference type="IntAct" id="Q9SYZ9">
    <property type="interactions" value="8"/>
</dbReference>
<dbReference type="STRING" id="3702.Q9SYZ9"/>
<dbReference type="iPTMnet" id="Q9SYZ9"/>
<dbReference type="PaxDb" id="3702-AT4G34340.1"/>
<dbReference type="ProteomicsDB" id="234134"/>
<dbReference type="EnsemblPlants" id="AT4G34340.1">
    <property type="protein sequence ID" value="AT4G34340.1"/>
    <property type="gene ID" value="AT4G34340"/>
</dbReference>
<dbReference type="GeneID" id="829584"/>
<dbReference type="Gramene" id="AT4G34340.1">
    <property type="protein sequence ID" value="AT4G34340.1"/>
    <property type="gene ID" value="AT4G34340"/>
</dbReference>
<dbReference type="KEGG" id="ath:AT4G34340"/>
<dbReference type="Araport" id="AT4G34340"/>
<dbReference type="TAIR" id="AT4G34340">
    <property type="gene designation" value="TAF8"/>
</dbReference>
<dbReference type="eggNOG" id="KOG2389">
    <property type="taxonomic scope" value="Eukaryota"/>
</dbReference>
<dbReference type="HOGENOM" id="CLU_046212_1_0_1"/>
<dbReference type="InParanoid" id="Q9SYZ9"/>
<dbReference type="OMA" id="SEAHTEW"/>
<dbReference type="PhylomeDB" id="Q9SYZ9"/>
<dbReference type="PRO" id="PR:Q9SYZ9"/>
<dbReference type="Proteomes" id="UP000006548">
    <property type="component" value="Chromosome 4"/>
</dbReference>
<dbReference type="ExpressionAtlas" id="Q9SYZ9">
    <property type="expression patterns" value="baseline and differential"/>
</dbReference>
<dbReference type="GO" id="GO:0005669">
    <property type="term" value="C:transcription factor TFIID complex"/>
    <property type="evidence" value="ECO:0007669"/>
    <property type="project" value="InterPro"/>
</dbReference>
<dbReference type="GO" id="GO:0046982">
    <property type="term" value="F:protein heterodimerization activity"/>
    <property type="evidence" value="ECO:0007669"/>
    <property type="project" value="InterPro"/>
</dbReference>
<dbReference type="CDD" id="cd00076">
    <property type="entry name" value="HFD_SF"/>
    <property type="match status" value="1"/>
</dbReference>
<dbReference type="CDD" id="cd08049">
    <property type="entry name" value="TAF8"/>
    <property type="match status" value="1"/>
</dbReference>
<dbReference type="Gene3D" id="1.10.20.10">
    <property type="entry name" value="Histone, subunit A"/>
    <property type="match status" value="1"/>
</dbReference>
<dbReference type="InterPro" id="IPR006565">
    <property type="entry name" value="BTP"/>
</dbReference>
<dbReference type="InterPro" id="IPR009072">
    <property type="entry name" value="Histone-fold"/>
</dbReference>
<dbReference type="InterPro" id="IPR037818">
    <property type="entry name" value="TAF8"/>
</dbReference>
<dbReference type="InterPro" id="IPR019473">
    <property type="entry name" value="TFIID_su8_C"/>
</dbReference>
<dbReference type="PANTHER" id="PTHR46338">
    <property type="entry name" value="TRANSCRIPTION INITIATION FACTOR TFIID SUBUNIT 8"/>
    <property type="match status" value="1"/>
</dbReference>
<dbReference type="PANTHER" id="PTHR46338:SF1">
    <property type="entry name" value="TRANSCRIPTION INITIATION FACTOR TFIID SUBUNIT 8"/>
    <property type="match status" value="1"/>
</dbReference>
<dbReference type="Pfam" id="PF07524">
    <property type="entry name" value="Bromo_TP"/>
    <property type="match status" value="1"/>
</dbReference>
<dbReference type="Pfam" id="PF10406">
    <property type="entry name" value="TAF8_C"/>
    <property type="match status" value="1"/>
</dbReference>
<dbReference type="SMART" id="SM00576">
    <property type="entry name" value="BTP"/>
    <property type="match status" value="1"/>
</dbReference>
<dbReference type="SUPFAM" id="SSF47113">
    <property type="entry name" value="Histone-fold"/>
    <property type="match status" value="1"/>
</dbReference>
<sequence>MNTERAQEGDRNDAASSSGCSESYEFSHAAAKAAVAQVCESVGYENFKDPALESLSGFALQYILQLGKTATSFANLTGRSQCNVFDIILALDDLTDNNGEQGISSESCSLGRSIKLREIIDFVNSSEEVPFSQPLPSFPVAISDRSRKMIPSFVEIGETPPGKHIPLWLPAFPDPHTYKETPMWIERVSDPRGDKIEQARQRRKAERALLSLQRKLVCKISSRNPVWGDMDGVKEEMRDDESELRSVSSGEKVESLNRDGLSVIEAFAPAMEAARDGFSSEAHTEWKKNKPVALSKLRTEKKFLGQPLDLSLQMKGEDRPISFVREEDRDDKRRRAEFILRQCMENPVDLNQL</sequence>
<protein>
    <recommendedName>
        <fullName>Transcription initiation factor TFIID subunit 8</fullName>
    </recommendedName>
    <alternativeName>
        <fullName>TBP-associated factor 8</fullName>
        <shortName>AtTAF8</shortName>
    </alternativeName>
</protein>
<feature type="chain" id="PRO_0000424045" description="Transcription initiation factor TFIID subunit 8">
    <location>
        <begin position="1"/>
        <end position="353"/>
    </location>
</feature>
<feature type="domain" description="Histone-fold">
    <location>
        <begin position="30"/>
        <end position="103"/>
    </location>
</feature>
<feature type="sequence conflict" description="In Ref. 6; AAM61252." evidence="4" ref="6">
    <original>VPF</original>
    <variation>IPS</variation>
    <location>
        <begin position="129"/>
        <end position="131"/>
    </location>
</feature>
<feature type="sequence conflict" description="In Ref. 6; AAM61252." evidence="4" ref="6">
    <original>M</original>
    <variation>K</variation>
    <location>
        <position position="314"/>
    </location>
</feature>
<gene>
    <name type="primary">TAF8</name>
    <name type="ordered locus">At4g34340</name>
</gene>
<proteinExistence type="evidence at protein level"/>
<evidence type="ECO:0000250" key="1"/>
<evidence type="ECO:0000269" key="2">
    <source>
    </source>
</evidence>
<evidence type="ECO:0000269" key="3">
    <source>
    </source>
</evidence>
<evidence type="ECO:0000305" key="4"/>
<organism>
    <name type="scientific">Arabidopsis thaliana</name>
    <name type="common">Mouse-ear cress</name>
    <dbReference type="NCBI Taxonomy" id="3702"/>
    <lineage>
        <taxon>Eukaryota</taxon>
        <taxon>Viridiplantae</taxon>
        <taxon>Streptophyta</taxon>
        <taxon>Embryophyta</taxon>
        <taxon>Tracheophyta</taxon>
        <taxon>Spermatophyta</taxon>
        <taxon>Magnoliopsida</taxon>
        <taxon>eudicotyledons</taxon>
        <taxon>Gunneridae</taxon>
        <taxon>Pentapetalae</taxon>
        <taxon>rosids</taxon>
        <taxon>malvids</taxon>
        <taxon>Brassicales</taxon>
        <taxon>Brassicaceae</taxon>
        <taxon>Camelineae</taxon>
        <taxon>Arabidopsis</taxon>
    </lineage>
</organism>
<accession>Q9SYZ9</accession>
<accession>Q8LFR3</accession>